<accession>A4VL70</accession>
<dbReference type="EC" id="3.6.1.54" evidence="1"/>
<dbReference type="EMBL" id="CP000304">
    <property type="protein sequence ID" value="ABP79721.1"/>
    <property type="molecule type" value="Genomic_DNA"/>
</dbReference>
<dbReference type="RefSeq" id="WP_011913190.1">
    <property type="nucleotide sequence ID" value="NC_009434.1"/>
</dbReference>
<dbReference type="SMR" id="A4VL70"/>
<dbReference type="KEGG" id="psa:PST_2050"/>
<dbReference type="eggNOG" id="COG2908">
    <property type="taxonomic scope" value="Bacteria"/>
</dbReference>
<dbReference type="HOGENOM" id="CLU_074586_0_0_6"/>
<dbReference type="UniPathway" id="UPA00359">
    <property type="reaction ID" value="UER00480"/>
</dbReference>
<dbReference type="Proteomes" id="UP000000233">
    <property type="component" value="Chromosome"/>
</dbReference>
<dbReference type="GO" id="GO:0005737">
    <property type="term" value="C:cytoplasm"/>
    <property type="evidence" value="ECO:0007669"/>
    <property type="project" value="InterPro"/>
</dbReference>
<dbReference type="GO" id="GO:0019897">
    <property type="term" value="C:extrinsic component of plasma membrane"/>
    <property type="evidence" value="ECO:0007669"/>
    <property type="project" value="UniProtKB-UniRule"/>
</dbReference>
<dbReference type="GO" id="GO:0030145">
    <property type="term" value="F:manganese ion binding"/>
    <property type="evidence" value="ECO:0007669"/>
    <property type="project" value="UniProtKB-UniRule"/>
</dbReference>
<dbReference type="GO" id="GO:0008758">
    <property type="term" value="F:UDP-2,3-diacylglucosamine hydrolase activity"/>
    <property type="evidence" value="ECO:0007669"/>
    <property type="project" value="UniProtKB-UniRule"/>
</dbReference>
<dbReference type="GO" id="GO:0009245">
    <property type="term" value="P:lipid A biosynthetic process"/>
    <property type="evidence" value="ECO:0007669"/>
    <property type="project" value="UniProtKB-UniRule"/>
</dbReference>
<dbReference type="CDD" id="cd07398">
    <property type="entry name" value="MPP_YbbF-LpxH"/>
    <property type="match status" value="1"/>
</dbReference>
<dbReference type="Gene3D" id="3.60.21.10">
    <property type="match status" value="1"/>
</dbReference>
<dbReference type="HAMAP" id="MF_00575">
    <property type="entry name" value="LpxH"/>
    <property type="match status" value="1"/>
</dbReference>
<dbReference type="InterPro" id="IPR004843">
    <property type="entry name" value="Calcineurin-like_PHP_ApaH"/>
</dbReference>
<dbReference type="InterPro" id="IPR043461">
    <property type="entry name" value="LpxH-like"/>
</dbReference>
<dbReference type="InterPro" id="IPR029052">
    <property type="entry name" value="Metallo-depent_PP-like"/>
</dbReference>
<dbReference type="InterPro" id="IPR010138">
    <property type="entry name" value="UDP-diacylglucosamine_Hdrlase"/>
</dbReference>
<dbReference type="NCBIfam" id="TIGR01854">
    <property type="entry name" value="lipid_A_lpxH"/>
    <property type="match status" value="1"/>
</dbReference>
<dbReference type="NCBIfam" id="NF003743">
    <property type="entry name" value="PRK05340.1"/>
    <property type="match status" value="1"/>
</dbReference>
<dbReference type="PANTHER" id="PTHR34990:SF1">
    <property type="entry name" value="UDP-2,3-DIACYLGLUCOSAMINE HYDROLASE"/>
    <property type="match status" value="1"/>
</dbReference>
<dbReference type="PANTHER" id="PTHR34990">
    <property type="entry name" value="UDP-2,3-DIACYLGLUCOSAMINE HYDROLASE-RELATED"/>
    <property type="match status" value="1"/>
</dbReference>
<dbReference type="Pfam" id="PF00149">
    <property type="entry name" value="Metallophos"/>
    <property type="match status" value="1"/>
</dbReference>
<dbReference type="SUPFAM" id="SSF56300">
    <property type="entry name" value="Metallo-dependent phosphatases"/>
    <property type="match status" value="1"/>
</dbReference>
<comment type="function">
    <text evidence="1">Hydrolyzes the pyrophosphate bond of UDP-2,3-diacylglucosamine to yield 2,3-diacylglucosamine 1-phosphate (lipid X) and UMP by catalyzing the attack of water at the alpha-P atom. Involved in the biosynthesis of lipid A, a phosphorylated glycolipid that anchors the lipopolysaccharide to the outer membrane of the cell.</text>
</comment>
<comment type="catalytic activity">
    <reaction evidence="1">
        <text>UDP-2-N,3-O-bis[(3R)-3-hydroxytetradecanoyl]-alpha-D-glucosamine + H2O = 2-N,3-O-bis[(3R)-3-hydroxytetradecanoyl]-alpha-D-glucosaminyl 1-phosphate + UMP + 2 H(+)</text>
        <dbReference type="Rhea" id="RHEA:25213"/>
        <dbReference type="ChEBI" id="CHEBI:15377"/>
        <dbReference type="ChEBI" id="CHEBI:15378"/>
        <dbReference type="ChEBI" id="CHEBI:57865"/>
        <dbReference type="ChEBI" id="CHEBI:57957"/>
        <dbReference type="ChEBI" id="CHEBI:78847"/>
        <dbReference type="EC" id="3.6.1.54"/>
    </reaction>
</comment>
<comment type="cofactor">
    <cofactor evidence="1">
        <name>Mn(2+)</name>
        <dbReference type="ChEBI" id="CHEBI:29035"/>
    </cofactor>
    <text evidence="1">Binds 2 Mn(2+) ions per subunit in a binuclear metal center.</text>
</comment>
<comment type="pathway">
    <text evidence="1">Glycolipid biosynthesis; lipid IV(A) biosynthesis; lipid IV(A) from (3R)-3-hydroxytetradecanoyl-[acyl-carrier-protein] and UDP-N-acetyl-alpha-D-glucosamine: step 4/6.</text>
</comment>
<comment type="subcellular location">
    <subcellularLocation>
        <location evidence="1">Cell inner membrane</location>
        <topology evidence="1">Peripheral membrane protein</topology>
        <orientation evidence="1">Cytoplasmic side</orientation>
    </subcellularLocation>
</comment>
<comment type="similarity">
    <text evidence="1">Belongs to the LpxH family.</text>
</comment>
<name>LPXH_STUS1</name>
<organism>
    <name type="scientific">Stutzerimonas stutzeri (strain A1501)</name>
    <name type="common">Pseudomonas stutzeri</name>
    <dbReference type="NCBI Taxonomy" id="379731"/>
    <lineage>
        <taxon>Bacteria</taxon>
        <taxon>Pseudomonadati</taxon>
        <taxon>Pseudomonadota</taxon>
        <taxon>Gammaproteobacteria</taxon>
        <taxon>Pseudomonadales</taxon>
        <taxon>Pseudomonadaceae</taxon>
        <taxon>Stutzerimonas</taxon>
    </lineage>
</organism>
<proteinExistence type="inferred from homology"/>
<reference key="1">
    <citation type="journal article" date="2008" name="Proc. Natl. Acad. Sci. U.S.A.">
        <title>Nitrogen fixation island and rhizosphere competence traits in the genome of root-associated Pseudomonas stutzeri A1501.</title>
        <authorList>
            <person name="Yan Y."/>
            <person name="Yang J."/>
            <person name="Dou Y."/>
            <person name="Chen M."/>
            <person name="Ping S."/>
            <person name="Peng J."/>
            <person name="Lu W."/>
            <person name="Zhang W."/>
            <person name="Yao Z."/>
            <person name="Li H."/>
            <person name="Liu W."/>
            <person name="He S."/>
            <person name="Geng L."/>
            <person name="Zhang X."/>
            <person name="Yang F."/>
            <person name="Yu H."/>
            <person name="Zhan Y."/>
            <person name="Li D."/>
            <person name="Lin Z."/>
            <person name="Wang Y."/>
            <person name="Elmerich C."/>
            <person name="Lin M."/>
            <person name="Jin Q."/>
        </authorList>
    </citation>
    <scope>NUCLEOTIDE SEQUENCE [LARGE SCALE GENOMIC DNA]</scope>
    <source>
        <strain>A1501</strain>
    </source>
</reference>
<sequence length="240" mass="27373">MILLISDLHLEEERPDITRAFLHFLATRATQAEALYILGDFFEVWIGDDAMTPFQESIARALHALSERGVRIYLMHGNRDFMIGQTFCHKAGCKLLADPSVVQLCGEPVLLMHGDSLCTRDEGYMRLRRLLRNPLSLFVLRNLPLATRRKLARKLRNESRTQTRMKASDIIDVTPELIPGVLAEHRVRTLIHGHTHRPATHDLEVDGQPAKRIVLGDWDRQGWALQVDENGYHQAPFALS</sequence>
<feature type="chain" id="PRO_1000025076" description="UDP-2,3-diacylglucosamine hydrolase">
    <location>
        <begin position="1"/>
        <end position="240"/>
    </location>
</feature>
<feature type="binding site" evidence="1">
    <location>
        <position position="7"/>
    </location>
    <ligand>
        <name>Mn(2+)</name>
        <dbReference type="ChEBI" id="CHEBI:29035"/>
        <label>1</label>
    </ligand>
</feature>
<feature type="binding site" evidence="1">
    <location>
        <position position="9"/>
    </location>
    <ligand>
        <name>Mn(2+)</name>
        <dbReference type="ChEBI" id="CHEBI:29035"/>
        <label>1</label>
    </ligand>
</feature>
<feature type="binding site" evidence="1">
    <location>
        <position position="40"/>
    </location>
    <ligand>
        <name>Mn(2+)</name>
        <dbReference type="ChEBI" id="CHEBI:29035"/>
        <label>1</label>
    </ligand>
</feature>
<feature type="binding site" evidence="1">
    <location>
        <position position="40"/>
    </location>
    <ligand>
        <name>Mn(2+)</name>
        <dbReference type="ChEBI" id="CHEBI:29035"/>
        <label>2</label>
    </ligand>
</feature>
<feature type="binding site" evidence="1">
    <location>
        <begin position="78"/>
        <end position="79"/>
    </location>
    <ligand>
        <name>substrate</name>
    </ligand>
</feature>
<feature type="binding site" evidence="1">
    <location>
        <position position="78"/>
    </location>
    <ligand>
        <name>Mn(2+)</name>
        <dbReference type="ChEBI" id="CHEBI:29035"/>
        <label>2</label>
    </ligand>
</feature>
<feature type="binding site" evidence="1">
    <location>
        <position position="113"/>
    </location>
    <ligand>
        <name>Mn(2+)</name>
        <dbReference type="ChEBI" id="CHEBI:29035"/>
        <label>2</label>
    </ligand>
</feature>
<feature type="binding site" evidence="1">
    <location>
        <position position="121"/>
    </location>
    <ligand>
        <name>substrate</name>
    </ligand>
</feature>
<feature type="binding site" evidence="1">
    <location>
        <position position="159"/>
    </location>
    <ligand>
        <name>substrate</name>
    </ligand>
</feature>
<feature type="binding site" evidence="1">
    <location>
        <position position="163"/>
    </location>
    <ligand>
        <name>substrate</name>
    </ligand>
</feature>
<feature type="binding site" evidence="1">
    <location>
        <position position="166"/>
    </location>
    <ligand>
        <name>substrate</name>
    </ligand>
</feature>
<feature type="binding site" evidence="1">
    <location>
        <position position="194"/>
    </location>
    <ligand>
        <name>Mn(2+)</name>
        <dbReference type="ChEBI" id="CHEBI:29035"/>
        <label>2</label>
    </ligand>
</feature>
<feature type="binding site" evidence="1">
    <location>
        <position position="194"/>
    </location>
    <ligand>
        <name>substrate</name>
    </ligand>
</feature>
<feature type="binding site" evidence="1">
    <location>
        <position position="196"/>
    </location>
    <ligand>
        <name>Mn(2+)</name>
        <dbReference type="ChEBI" id="CHEBI:29035"/>
        <label>1</label>
    </ligand>
</feature>
<gene>
    <name evidence="1" type="primary">lpxH</name>
    <name type="ordered locus">PST_2050</name>
</gene>
<protein>
    <recommendedName>
        <fullName evidence="1">UDP-2,3-diacylglucosamine hydrolase</fullName>
        <ecNumber evidence="1">3.6.1.54</ecNumber>
    </recommendedName>
    <alternativeName>
        <fullName evidence="1">UDP-2,3-diacylglucosamine diphosphatase</fullName>
    </alternativeName>
</protein>
<keyword id="KW-0997">Cell inner membrane</keyword>
<keyword id="KW-1003">Cell membrane</keyword>
<keyword id="KW-0378">Hydrolase</keyword>
<keyword id="KW-0441">Lipid A biosynthesis</keyword>
<keyword id="KW-0444">Lipid biosynthesis</keyword>
<keyword id="KW-0443">Lipid metabolism</keyword>
<keyword id="KW-0464">Manganese</keyword>
<keyword id="KW-0472">Membrane</keyword>
<keyword id="KW-0479">Metal-binding</keyword>
<keyword id="KW-1185">Reference proteome</keyword>
<evidence type="ECO:0000255" key="1">
    <source>
        <dbReference type="HAMAP-Rule" id="MF_00575"/>
    </source>
</evidence>